<gene>
    <name evidence="1" type="primary">sepF</name>
    <name type="ordered locus">RHA1_ro01082</name>
</gene>
<sequence length="225" mass="25129">MSSLHKFKAYFGMVPLDDYEDEYLDEPEPARRPARPARDSGRDPYLDRDDRDFAEPAFSKAAYAPGRRDDLDDDFDRYDGPRHSSRVEPVAVRSARPSASGAVRGSTRGALAVDTRSERVESRRGPLFDEGGPLSKITTLRPRDYGEARTIGERFRDGTPVIMDLVEMSNADAKRLVDFAAGLAFALRGSFDKVATKVFLLSPADIDVSAEERRRIAETGFYSQK</sequence>
<proteinExistence type="inferred from homology"/>
<dbReference type="EMBL" id="CP000431">
    <property type="protein sequence ID" value="ABG92909.1"/>
    <property type="molecule type" value="Genomic_DNA"/>
</dbReference>
<dbReference type="RefSeq" id="WP_005574458.1">
    <property type="nucleotide sequence ID" value="NC_008268.1"/>
</dbReference>
<dbReference type="SMR" id="Q0SHS7"/>
<dbReference type="KEGG" id="rha:RHA1_ro01082"/>
<dbReference type="eggNOG" id="COG1799">
    <property type="taxonomic scope" value="Bacteria"/>
</dbReference>
<dbReference type="HOGENOM" id="CLU_078499_0_0_11"/>
<dbReference type="OrthoDB" id="3731101at2"/>
<dbReference type="Proteomes" id="UP000008710">
    <property type="component" value="Chromosome"/>
</dbReference>
<dbReference type="GO" id="GO:0005737">
    <property type="term" value="C:cytoplasm"/>
    <property type="evidence" value="ECO:0007669"/>
    <property type="project" value="UniProtKB-SubCell"/>
</dbReference>
<dbReference type="GO" id="GO:0000917">
    <property type="term" value="P:division septum assembly"/>
    <property type="evidence" value="ECO:0007669"/>
    <property type="project" value="UniProtKB-KW"/>
</dbReference>
<dbReference type="GO" id="GO:0043093">
    <property type="term" value="P:FtsZ-dependent cytokinesis"/>
    <property type="evidence" value="ECO:0007669"/>
    <property type="project" value="UniProtKB-UniRule"/>
</dbReference>
<dbReference type="FunFam" id="3.30.110.150:FF:000001">
    <property type="entry name" value="Cell division protein SepF"/>
    <property type="match status" value="1"/>
</dbReference>
<dbReference type="Gene3D" id="3.30.110.150">
    <property type="entry name" value="SepF-like protein"/>
    <property type="match status" value="1"/>
</dbReference>
<dbReference type="HAMAP" id="MF_01197">
    <property type="entry name" value="SepF"/>
    <property type="match status" value="1"/>
</dbReference>
<dbReference type="InterPro" id="IPR023052">
    <property type="entry name" value="Cell_div_SepF"/>
</dbReference>
<dbReference type="InterPro" id="IPR007561">
    <property type="entry name" value="Cell_div_SepF/SepF-rel"/>
</dbReference>
<dbReference type="InterPro" id="IPR038594">
    <property type="entry name" value="SepF-like_sf"/>
</dbReference>
<dbReference type="PANTHER" id="PTHR35798">
    <property type="entry name" value="CELL DIVISION PROTEIN SEPF"/>
    <property type="match status" value="1"/>
</dbReference>
<dbReference type="PANTHER" id="PTHR35798:SF1">
    <property type="entry name" value="CELL DIVISION PROTEIN SEPF"/>
    <property type="match status" value="1"/>
</dbReference>
<dbReference type="Pfam" id="PF04472">
    <property type="entry name" value="SepF"/>
    <property type="match status" value="1"/>
</dbReference>
<protein>
    <recommendedName>
        <fullName evidence="1">Cell division protein SepF</fullName>
    </recommendedName>
</protein>
<feature type="chain" id="PRO_0000334069" description="Cell division protein SepF">
    <location>
        <begin position="1"/>
        <end position="225"/>
    </location>
</feature>
<feature type="region of interest" description="Disordered" evidence="2">
    <location>
        <begin position="22"/>
        <end position="116"/>
    </location>
</feature>
<feature type="compositionally biased region" description="Basic and acidic residues" evidence="2">
    <location>
        <begin position="28"/>
        <end position="54"/>
    </location>
</feature>
<feature type="compositionally biased region" description="Basic and acidic residues" evidence="2">
    <location>
        <begin position="77"/>
        <end position="86"/>
    </location>
</feature>
<keyword id="KW-0131">Cell cycle</keyword>
<keyword id="KW-0132">Cell division</keyword>
<keyword id="KW-0963">Cytoplasm</keyword>
<keyword id="KW-0717">Septation</keyword>
<evidence type="ECO:0000255" key="1">
    <source>
        <dbReference type="HAMAP-Rule" id="MF_01197"/>
    </source>
</evidence>
<evidence type="ECO:0000256" key="2">
    <source>
        <dbReference type="SAM" id="MobiDB-lite"/>
    </source>
</evidence>
<accession>Q0SHS7</accession>
<reference key="1">
    <citation type="journal article" date="2006" name="Proc. Natl. Acad. Sci. U.S.A.">
        <title>The complete genome of Rhodococcus sp. RHA1 provides insights into a catabolic powerhouse.</title>
        <authorList>
            <person name="McLeod M.P."/>
            <person name="Warren R.L."/>
            <person name="Hsiao W.W.L."/>
            <person name="Araki N."/>
            <person name="Myhre M."/>
            <person name="Fernandes C."/>
            <person name="Miyazawa D."/>
            <person name="Wong W."/>
            <person name="Lillquist A.L."/>
            <person name="Wang D."/>
            <person name="Dosanjh M."/>
            <person name="Hara H."/>
            <person name="Petrescu A."/>
            <person name="Morin R.D."/>
            <person name="Yang G."/>
            <person name="Stott J.M."/>
            <person name="Schein J.E."/>
            <person name="Shin H."/>
            <person name="Smailus D."/>
            <person name="Siddiqui A.S."/>
            <person name="Marra M.A."/>
            <person name="Jones S.J.M."/>
            <person name="Holt R."/>
            <person name="Brinkman F.S.L."/>
            <person name="Miyauchi K."/>
            <person name="Fukuda M."/>
            <person name="Davies J.E."/>
            <person name="Mohn W.W."/>
            <person name="Eltis L.D."/>
        </authorList>
    </citation>
    <scope>NUCLEOTIDE SEQUENCE [LARGE SCALE GENOMIC DNA]</scope>
    <source>
        <strain>RHA1</strain>
    </source>
</reference>
<comment type="function">
    <text evidence="1">Cell division protein that is part of the divisome complex and is recruited early to the Z-ring. Probably stimulates Z-ring formation, perhaps through the cross-linking of FtsZ protofilaments. Its function overlaps with FtsA.</text>
</comment>
<comment type="subunit">
    <text evidence="1">Homodimer. Interacts with FtsZ.</text>
</comment>
<comment type="subcellular location">
    <subcellularLocation>
        <location evidence="1">Cytoplasm</location>
    </subcellularLocation>
    <text evidence="1">Localizes to the division site, in a FtsZ-dependent manner.</text>
</comment>
<comment type="similarity">
    <text evidence="1">Belongs to the SepF family.</text>
</comment>
<name>SEPF_RHOJR</name>
<organism>
    <name type="scientific">Rhodococcus jostii (strain RHA1)</name>
    <dbReference type="NCBI Taxonomy" id="101510"/>
    <lineage>
        <taxon>Bacteria</taxon>
        <taxon>Bacillati</taxon>
        <taxon>Actinomycetota</taxon>
        <taxon>Actinomycetes</taxon>
        <taxon>Mycobacteriales</taxon>
        <taxon>Nocardiaceae</taxon>
        <taxon>Rhodococcus</taxon>
    </lineage>
</organism>